<comment type="function">
    <text evidence="1">CRISPR (clustered regularly interspaced short palindromic repeat), is an adaptive immune system that provides protection against mobile genetic elements (viruses, transposable elements and conjugative plasmids). CRISPR clusters contain sequences complementary to antecedent mobile elements and target invading nucleic acids. CRISPR clusters are transcribed and processed into CRISPR RNA (crRNA). Functions as a ssRNA-specific endoribonuclease. Involved in the integration of spacer DNA into the CRISPR cassette.</text>
</comment>
<comment type="cofactor">
    <cofactor evidence="1">
        <name>Mg(2+)</name>
        <dbReference type="ChEBI" id="CHEBI:18420"/>
    </cofactor>
</comment>
<comment type="subunit">
    <text evidence="1">Homodimer, forms a heterotetramer with a Cas1 homodimer.</text>
</comment>
<comment type="similarity">
    <text evidence="1">Belongs to the CRISPR-associated endoribonuclease Cas2 protein family.</text>
</comment>
<accession>Q2RV91</accession>
<dbReference type="EC" id="3.1.-.-" evidence="1"/>
<dbReference type="EMBL" id="CP000230">
    <property type="protein sequence ID" value="ABC21954.1"/>
    <property type="molecule type" value="Genomic_DNA"/>
</dbReference>
<dbReference type="RefSeq" id="YP_426241.1">
    <property type="nucleotide sequence ID" value="NC_007643.1"/>
</dbReference>
<dbReference type="SMR" id="Q2RV91"/>
<dbReference type="STRING" id="269796.Rru_A1153"/>
<dbReference type="DNASU" id="3834663"/>
<dbReference type="EnsemblBacteria" id="ABC21954">
    <property type="protein sequence ID" value="ABC21954"/>
    <property type="gene ID" value="Rru_A1153"/>
</dbReference>
<dbReference type="KEGG" id="rru:Rru_A1153"/>
<dbReference type="PATRIC" id="fig|269796.9.peg.1213"/>
<dbReference type="eggNOG" id="COG1343">
    <property type="taxonomic scope" value="Bacteria"/>
</dbReference>
<dbReference type="HOGENOM" id="CLU_161124_3_1_5"/>
<dbReference type="Proteomes" id="UP000001929">
    <property type="component" value="Chromosome"/>
</dbReference>
<dbReference type="GO" id="GO:0046872">
    <property type="term" value="F:metal ion binding"/>
    <property type="evidence" value="ECO:0007669"/>
    <property type="project" value="UniProtKB-UniRule"/>
</dbReference>
<dbReference type="GO" id="GO:0004521">
    <property type="term" value="F:RNA endonuclease activity"/>
    <property type="evidence" value="ECO:0007669"/>
    <property type="project" value="InterPro"/>
</dbReference>
<dbReference type="GO" id="GO:0051607">
    <property type="term" value="P:defense response to virus"/>
    <property type="evidence" value="ECO:0007669"/>
    <property type="project" value="UniProtKB-UniRule"/>
</dbReference>
<dbReference type="GO" id="GO:0043571">
    <property type="term" value="P:maintenance of CRISPR repeat elements"/>
    <property type="evidence" value="ECO:0007669"/>
    <property type="project" value="UniProtKB-UniRule"/>
</dbReference>
<dbReference type="CDD" id="cd09725">
    <property type="entry name" value="Cas2_I_II_III"/>
    <property type="match status" value="1"/>
</dbReference>
<dbReference type="Gene3D" id="3.30.70.240">
    <property type="match status" value="1"/>
</dbReference>
<dbReference type="HAMAP" id="MF_01471">
    <property type="entry name" value="Cas2"/>
    <property type="match status" value="1"/>
</dbReference>
<dbReference type="InterPro" id="IPR021127">
    <property type="entry name" value="CRISPR_associated_Cas2"/>
</dbReference>
<dbReference type="InterPro" id="IPR019199">
    <property type="entry name" value="Virulence_VapD/CRISPR_Cas2"/>
</dbReference>
<dbReference type="NCBIfam" id="TIGR01573">
    <property type="entry name" value="cas2"/>
    <property type="match status" value="1"/>
</dbReference>
<dbReference type="PANTHER" id="PTHR34405">
    <property type="entry name" value="CRISPR-ASSOCIATED ENDORIBONUCLEASE CAS2"/>
    <property type="match status" value="1"/>
</dbReference>
<dbReference type="PANTHER" id="PTHR34405:SF3">
    <property type="entry name" value="CRISPR-ASSOCIATED ENDORIBONUCLEASE CAS2 3"/>
    <property type="match status" value="1"/>
</dbReference>
<dbReference type="Pfam" id="PF09827">
    <property type="entry name" value="CRISPR_Cas2"/>
    <property type="match status" value="1"/>
</dbReference>
<dbReference type="SUPFAM" id="SSF143430">
    <property type="entry name" value="TTP0101/SSO1404-like"/>
    <property type="match status" value="1"/>
</dbReference>
<name>CAS2D_RHORT</name>
<keyword id="KW-0051">Antiviral defense</keyword>
<keyword id="KW-0255">Endonuclease</keyword>
<keyword id="KW-0378">Hydrolase</keyword>
<keyword id="KW-0460">Magnesium</keyword>
<keyword id="KW-0479">Metal-binding</keyword>
<keyword id="KW-0540">Nuclease</keyword>
<keyword id="KW-1185">Reference proteome</keyword>
<protein>
    <recommendedName>
        <fullName evidence="1">CRISPR-associated endoribonuclease Cas2 4</fullName>
        <ecNumber evidence="1">3.1.-.-</ecNumber>
    </recommendedName>
</protein>
<gene>
    <name evidence="1" type="primary">cas2-4</name>
    <name type="ordered locus">Rru_A1153</name>
</gene>
<proteinExistence type="inferred from homology"/>
<reference key="1">
    <citation type="journal article" date="2011" name="Stand. Genomic Sci.">
        <title>Complete genome sequence of Rhodospirillum rubrum type strain (S1).</title>
        <authorList>
            <person name="Munk A.C."/>
            <person name="Copeland A."/>
            <person name="Lucas S."/>
            <person name="Lapidus A."/>
            <person name="Del Rio T.G."/>
            <person name="Barry K."/>
            <person name="Detter J.C."/>
            <person name="Hammon N."/>
            <person name="Israni S."/>
            <person name="Pitluck S."/>
            <person name="Brettin T."/>
            <person name="Bruce D."/>
            <person name="Han C."/>
            <person name="Tapia R."/>
            <person name="Gilna P."/>
            <person name="Schmutz J."/>
            <person name="Larimer F."/>
            <person name="Land M."/>
            <person name="Kyrpides N.C."/>
            <person name="Mavromatis K."/>
            <person name="Richardson P."/>
            <person name="Rohde M."/>
            <person name="Goeker M."/>
            <person name="Klenk H.P."/>
            <person name="Zhang Y."/>
            <person name="Roberts G.P."/>
            <person name="Reslewic S."/>
            <person name="Schwartz D.C."/>
        </authorList>
    </citation>
    <scope>NUCLEOTIDE SEQUENCE [LARGE SCALE GENOMIC DNA]</scope>
    <source>
        <strain>ATCC 11170 / ATH 1.1.1 / DSM 467 / LMG 4362 / NCIMB 8255 / S1</strain>
    </source>
</reference>
<sequence>MVWWDDPDDAFCEDPFDPEGDYGALQVGKQPMNRYVICYDIVDDKRRLKVAKCLDSYGSRVQFSVFEVLVSKPLMTRMVRELGALINAKTDRISIYPQCATCDARRTDLGATVEKPVHEPWIIV</sequence>
<organism>
    <name type="scientific">Rhodospirillum rubrum (strain ATCC 11170 / ATH 1.1.1 / DSM 467 / LMG 4362 / NCIMB 8255 / S1)</name>
    <dbReference type="NCBI Taxonomy" id="269796"/>
    <lineage>
        <taxon>Bacteria</taxon>
        <taxon>Pseudomonadati</taxon>
        <taxon>Pseudomonadota</taxon>
        <taxon>Alphaproteobacteria</taxon>
        <taxon>Rhodospirillales</taxon>
        <taxon>Rhodospirillaceae</taxon>
        <taxon>Rhodospirillum</taxon>
    </lineage>
</organism>
<evidence type="ECO:0000255" key="1">
    <source>
        <dbReference type="HAMAP-Rule" id="MF_01471"/>
    </source>
</evidence>
<feature type="chain" id="PRO_0000417724" description="CRISPR-associated endoribonuclease Cas2 4">
    <location>
        <begin position="1"/>
        <end position="124"/>
    </location>
</feature>
<feature type="binding site" evidence="1">
    <location>
        <position position="40"/>
    </location>
    <ligand>
        <name>Mg(2+)</name>
        <dbReference type="ChEBI" id="CHEBI:18420"/>
        <note>catalytic</note>
    </ligand>
</feature>